<keyword id="KW-0143">Chaperone</keyword>
<keyword id="KW-0963">Cytoplasm</keyword>
<keyword id="KW-1185">Reference proteome</keyword>
<keyword id="KW-0690">Ribosome biogenesis</keyword>
<keyword id="KW-0698">rRNA processing</keyword>
<evidence type="ECO:0000255" key="1">
    <source>
        <dbReference type="HAMAP-Rule" id="MF_00014"/>
    </source>
</evidence>
<proteinExistence type="inferred from homology"/>
<dbReference type="EMBL" id="CP000853">
    <property type="protein sequence ID" value="ABW19010.1"/>
    <property type="molecule type" value="Genomic_DNA"/>
</dbReference>
<dbReference type="RefSeq" id="WP_012159322.1">
    <property type="nucleotide sequence ID" value="NC_009922.1"/>
</dbReference>
<dbReference type="SMR" id="A8MHC3"/>
<dbReference type="STRING" id="350688.Clos_1466"/>
<dbReference type="KEGG" id="aoe:Clos_1466"/>
<dbReference type="eggNOG" id="COG0806">
    <property type="taxonomic scope" value="Bacteria"/>
</dbReference>
<dbReference type="HOGENOM" id="CLU_077636_3_2_9"/>
<dbReference type="OrthoDB" id="9810331at2"/>
<dbReference type="Proteomes" id="UP000000269">
    <property type="component" value="Chromosome"/>
</dbReference>
<dbReference type="GO" id="GO:0005737">
    <property type="term" value="C:cytoplasm"/>
    <property type="evidence" value="ECO:0007669"/>
    <property type="project" value="UniProtKB-SubCell"/>
</dbReference>
<dbReference type="GO" id="GO:0005840">
    <property type="term" value="C:ribosome"/>
    <property type="evidence" value="ECO:0007669"/>
    <property type="project" value="InterPro"/>
</dbReference>
<dbReference type="GO" id="GO:0043022">
    <property type="term" value="F:ribosome binding"/>
    <property type="evidence" value="ECO:0007669"/>
    <property type="project" value="InterPro"/>
</dbReference>
<dbReference type="GO" id="GO:0042274">
    <property type="term" value="P:ribosomal small subunit biogenesis"/>
    <property type="evidence" value="ECO:0007669"/>
    <property type="project" value="UniProtKB-UniRule"/>
</dbReference>
<dbReference type="GO" id="GO:0006364">
    <property type="term" value="P:rRNA processing"/>
    <property type="evidence" value="ECO:0007669"/>
    <property type="project" value="UniProtKB-UniRule"/>
</dbReference>
<dbReference type="Gene3D" id="2.30.30.240">
    <property type="entry name" value="PRC-barrel domain"/>
    <property type="match status" value="1"/>
</dbReference>
<dbReference type="Gene3D" id="2.40.30.60">
    <property type="entry name" value="RimM"/>
    <property type="match status" value="1"/>
</dbReference>
<dbReference type="HAMAP" id="MF_00014">
    <property type="entry name" value="Ribosome_mat_RimM"/>
    <property type="match status" value="1"/>
</dbReference>
<dbReference type="InterPro" id="IPR027275">
    <property type="entry name" value="PRC-brl_dom"/>
</dbReference>
<dbReference type="InterPro" id="IPR011033">
    <property type="entry name" value="PRC_barrel-like_sf"/>
</dbReference>
<dbReference type="InterPro" id="IPR011961">
    <property type="entry name" value="RimM"/>
</dbReference>
<dbReference type="InterPro" id="IPR002676">
    <property type="entry name" value="RimM_N"/>
</dbReference>
<dbReference type="InterPro" id="IPR036976">
    <property type="entry name" value="RimM_N_sf"/>
</dbReference>
<dbReference type="InterPro" id="IPR009000">
    <property type="entry name" value="Transl_B-barrel_sf"/>
</dbReference>
<dbReference type="NCBIfam" id="TIGR02273">
    <property type="entry name" value="16S_RimM"/>
    <property type="match status" value="1"/>
</dbReference>
<dbReference type="PANTHER" id="PTHR33692">
    <property type="entry name" value="RIBOSOME MATURATION FACTOR RIMM"/>
    <property type="match status" value="1"/>
</dbReference>
<dbReference type="PANTHER" id="PTHR33692:SF1">
    <property type="entry name" value="RIBOSOME MATURATION FACTOR RIMM"/>
    <property type="match status" value="1"/>
</dbReference>
<dbReference type="Pfam" id="PF05239">
    <property type="entry name" value="PRC"/>
    <property type="match status" value="1"/>
</dbReference>
<dbReference type="Pfam" id="PF01782">
    <property type="entry name" value="RimM"/>
    <property type="match status" value="1"/>
</dbReference>
<dbReference type="SUPFAM" id="SSF50346">
    <property type="entry name" value="PRC-barrel domain"/>
    <property type="match status" value="1"/>
</dbReference>
<dbReference type="SUPFAM" id="SSF50447">
    <property type="entry name" value="Translation proteins"/>
    <property type="match status" value="1"/>
</dbReference>
<comment type="function">
    <text evidence="1">An accessory protein needed during the final step in the assembly of 30S ribosomal subunit, possibly for assembly of the head region. Essential for efficient processing of 16S rRNA. May be needed both before and after RbfA during the maturation of 16S rRNA. It has affinity for free ribosomal 30S subunits but not for 70S ribosomes.</text>
</comment>
<comment type="subunit">
    <text evidence="1">Binds ribosomal protein uS19.</text>
</comment>
<comment type="subcellular location">
    <subcellularLocation>
        <location evidence="1">Cytoplasm</location>
    </subcellularLocation>
</comment>
<comment type="domain">
    <text evidence="1">The PRC barrel domain binds ribosomal protein uS19.</text>
</comment>
<comment type="similarity">
    <text evidence="1">Belongs to the RimM family.</text>
</comment>
<organism>
    <name type="scientific">Alkaliphilus oremlandii (strain OhILAs)</name>
    <name type="common">Clostridium oremlandii (strain OhILAs)</name>
    <dbReference type="NCBI Taxonomy" id="350688"/>
    <lineage>
        <taxon>Bacteria</taxon>
        <taxon>Bacillati</taxon>
        <taxon>Bacillota</taxon>
        <taxon>Clostridia</taxon>
        <taxon>Peptostreptococcales</taxon>
        <taxon>Natronincolaceae</taxon>
        <taxon>Alkaliphilus</taxon>
    </lineage>
</organism>
<sequence>MAKMLRVGKITNTHGIKGDLKVLPLTDYFERFEELEWVYIEGFKDKFYIENIKYKPTLVILSFEGYGDINLVEKFKDRYLLIDESQRRILPEDTYYIADIIGLDVFTVKDEYIGKVVDIIQTGSSEVYVIRMNNLKEIMIPSVKEFMPEISLEKKRITIDPIEGMIE</sequence>
<reference key="1">
    <citation type="submission" date="2007-10" db="EMBL/GenBank/DDBJ databases">
        <title>Complete genome of Alkaliphilus oremlandii OhILAs.</title>
        <authorList>
            <person name="Copeland A."/>
            <person name="Lucas S."/>
            <person name="Lapidus A."/>
            <person name="Barry K."/>
            <person name="Detter J.C."/>
            <person name="Glavina del Rio T."/>
            <person name="Hammon N."/>
            <person name="Israni S."/>
            <person name="Dalin E."/>
            <person name="Tice H."/>
            <person name="Pitluck S."/>
            <person name="Chain P."/>
            <person name="Malfatti S."/>
            <person name="Shin M."/>
            <person name="Vergez L."/>
            <person name="Schmutz J."/>
            <person name="Larimer F."/>
            <person name="Land M."/>
            <person name="Hauser L."/>
            <person name="Kyrpides N."/>
            <person name="Mikhailova N."/>
            <person name="Stolz J.F."/>
            <person name="Dawson A."/>
            <person name="Fisher E."/>
            <person name="Crable B."/>
            <person name="Perera E."/>
            <person name="Lisak J."/>
            <person name="Ranganathan M."/>
            <person name="Basu P."/>
            <person name="Richardson P."/>
        </authorList>
    </citation>
    <scope>NUCLEOTIDE SEQUENCE [LARGE SCALE GENOMIC DNA]</scope>
    <source>
        <strain>OhILAs</strain>
    </source>
</reference>
<accession>A8MHC3</accession>
<name>RIMM_ALKOO</name>
<feature type="chain" id="PRO_1000057113" description="Ribosome maturation factor RimM">
    <location>
        <begin position="1"/>
        <end position="167"/>
    </location>
</feature>
<feature type="domain" description="PRC barrel" evidence="1">
    <location>
        <begin position="92"/>
        <end position="165"/>
    </location>
</feature>
<gene>
    <name evidence="1" type="primary">rimM</name>
    <name type="ordered locus">Clos_1466</name>
</gene>
<protein>
    <recommendedName>
        <fullName evidence="1">Ribosome maturation factor RimM</fullName>
    </recommendedName>
</protein>